<organism>
    <name type="scientific">Neorhizobium galegae</name>
    <name type="common">Rhizobium galegae</name>
    <dbReference type="NCBI Taxonomy" id="399"/>
    <lineage>
        <taxon>Bacteria</taxon>
        <taxon>Pseudomonadati</taxon>
        <taxon>Pseudomonadota</taxon>
        <taxon>Alphaproteobacteria</taxon>
        <taxon>Hyphomicrobiales</taxon>
        <taxon>Rhizobiaceae</taxon>
        <taxon>Rhizobium/Agrobacterium group</taxon>
        <taxon>Neorhizobium</taxon>
    </lineage>
</organism>
<reference key="1">
    <citation type="submission" date="1998-11" db="EMBL/GenBank/DDBJ databases">
        <title>Role of fbcFBC gene cluster in denitrification in Rhizobium galegae G-179.</title>
        <authorList>
            <person name="Ye R.W."/>
            <person name="Wang T."/>
        </authorList>
    </citation>
    <scope>NUCLEOTIDE SEQUENCE [GENOMIC DNA]</scope>
    <source>
        <strain>G-179</strain>
    </source>
</reference>
<evidence type="ECO:0000255" key="1">
    <source>
        <dbReference type="HAMAP-Rule" id="MF_00004"/>
    </source>
</evidence>
<evidence type="ECO:0000305" key="2"/>
<gene>
    <name evidence="1" type="primary">apt</name>
    <name type="synonym">aprT</name>
</gene>
<protein>
    <recommendedName>
        <fullName evidence="1">Adenine phosphoribosyltransferase</fullName>
        <shortName evidence="1">APRT</shortName>
        <ecNumber evidence="1">2.4.2.7</ecNumber>
    </recommendedName>
</protein>
<accession>Q9RQF8</accession>
<name>APT_NEOGA</name>
<proteinExistence type="inferred from homology"/>
<keyword id="KW-0963">Cytoplasm</keyword>
<keyword id="KW-0328">Glycosyltransferase</keyword>
<keyword id="KW-0660">Purine salvage</keyword>
<keyword id="KW-0808">Transferase</keyword>
<dbReference type="EC" id="2.4.2.7" evidence="1"/>
<dbReference type="EMBL" id="AF109172">
    <property type="protein sequence ID" value="AAF14237.1"/>
    <property type="status" value="ALT_INIT"/>
    <property type="molecule type" value="Genomic_DNA"/>
</dbReference>
<dbReference type="SMR" id="Q9RQF8"/>
<dbReference type="UniPathway" id="UPA00588">
    <property type="reaction ID" value="UER00646"/>
</dbReference>
<dbReference type="GO" id="GO:0005737">
    <property type="term" value="C:cytoplasm"/>
    <property type="evidence" value="ECO:0007669"/>
    <property type="project" value="UniProtKB-SubCell"/>
</dbReference>
<dbReference type="GO" id="GO:0002055">
    <property type="term" value="F:adenine binding"/>
    <property type="evidence" value="ECO:0007669"/>
    <property type="project" value="TreeGrafter"/>
</dbReference>
<dbReference type="GO" id="GO:0003999">
    <property type="term" value="F:adenine phosphoribosyltransferase activity"/>
    <property type="evidence" value="ECO:0007669"/>
    <property type="project" value="UniProtKB-UniRule"/>
</dbReference>
<dbReference type="GO" id="GO:0016208">
    <property type="term" value="F:AMP binding"/>
    <property type="evidence" value="ECO:0007669"/>
    <property type="project" value="TreeGrafter"/>
</dbReference>
<dbReference type="GO" id="GO:0006168">
    <property type="term" value="P:adenine salvage"/>
    <property type="evidence" value="ECO:0007669"/>
    <property type="project" value="InterPro"/>
</dbReference>
<dbReference type="GO" id="GO:0044209">
    <property type="term" value="P:AMP salvage"/>
    <property type="evidence" value="ECO:0007669"/>
    <property type="project" value="UniProtKB-UniRule"/>
</dbReference>
<dbReference type="GO" id="GO:0006166">
    <property type="term" value="P:purine ribonucleoside salvage"/>
    <property type="evidence" value="ECO:0007669"/>
    <property type="project" value="UniProtKB-KW"/>
</dbReference>
<dbReference type="CDD" id="cd06223">
    <property type="entry name" value="PRTases_typeI"/>
    <property type="match status" value="1"/>
</dbReference>
<dbReference type="FunFam" id="3.40.50.2020:FF:000021">
    <property type="entry name" value="Adenine phosphoribosyltransferase"/>
    <property type="match status" value="1"/>
</dbReference>
<dbReference type="Gene3D" id="3.40.50.2020">
    <property type="match status" value="1"/>
</dbReference>
<dbReference type="HAMAP" id="MF_00004">
    <property type="entry name" value="Aden_phosphoribosyltr"/>
    <property type="match status" value="1"/>
</dbReference>
<dbReference type="InterPro" id="IPR005764">
    <property type="entry name" value="Ade_phspho_trans"/>
</dbReference>
<dbReference type="InterPro" id="IPR000836">
    <property type="entry name" value="PRibTrfase_dom"/>
</dbReference>
<dbReference type="InterPro" id="IPR029057">
    <property type="entry name" value="PRTase-like"/>
</dbReference>
<dbReference type="InterPro" id="IPR050054">
    <property type="entry name" value="UPRTase/APRTase"/>
</dbReference>
<dbReference type="NCBIfam" id="TIGR01090">
    <property type="entry name" value="apt"/>
    <property type="match status" value="1"/>
</dbReference>
<dbReference type="NCBIfam" id="NF002634">
    <property type="entry name" value="PRK02304.1-3"/>
    <property type="match status" value="1"/>
</dbReference>
<dbReference type="NCBIfam" id="NF002636">
    <property type="entry name" value="PRK02304.1-5"/>
    <property type="match status" value="1"/>
</dbReference>
<dbReference type="PANTHER" id="PTHR32315">
    <property type="entry name" value="ADENINE PHOSPHORIBOSYLTRANSFERASE"/>
    <property type="match status" value="1"/>
</dbReference>
<dbReference type="PANTHER" id="PTHR32315:SF3">
    <property type="entry name" value="ADENINE PHOSPHORIBOSYLTRANSFERASE"/>
    <property type="match status" value="1"/>
</dbReference>
<dbReference type="Pfam" id="PF00156">
    <property type="entry name" value="Pribosyltran"/>
    <property type="match status" value="1"/>
</dbReference>
<dbReference type="SUPFAM" id="SSF53271">
    <property type="entry name" value="PRTase-like"/>
    <property type="match status" value="1"/>
</dbReference>
<dbReference type="PROSITE" id="PS00103">
    <property type="entry name" value="PUR_PYR_PR_TRANSFER"/>
    <property type="match status" value="1"/>
</dbReference>
<sequence>MTASTKDILATAIRSIPDYPKPGIIFRDITTLLGDAAAFRLAVDELVKPYEGLGVDKIAGMEARGFILGGAMAHQLSAGFVPIRKKGKLPYRTVSMAYALEYGTDEMEIHVDAVKPGEKVILCDDLIATGGTAVGAVKLLRQIGAEVVSACFVIDLPDLGGRKALEALGVEVRTLAEFSGH</sequence>
<comment type="function">
    <text evidence="1">Catalyzes a salvage reaction resulting in the formation of AMP, that is energically less costly than de novo synthesis.</text>
</comment>
<comment type="catalytic activity">
    <reaction evidence="1">
        <text>AMP + diphosphate = 5-phospho-alpha-D-ribose 1-diphosphate + adenine</text>
        <dbReference type="Rhea" id="RHEA:16609"/>
        <dbReference type="ChEBI" id="CHEBI:16708"/>
        <dbReference type="ChEBI" id="CHEBI:33019"/>
        <dbReference type="ChEBI" id="CHEBI:58017"/>
        <dbReference type="ChEBI" id="CHEBI:456215"/>
        <dbReference type="EC" id="2.4.2.7"/>
    </reaction>
</comment>
<comment type="pathway">
    <text evidence="1">Purine metabolism; AMP biosynthesis via salvage pathway; AMP from adenine: step 1/1.</text>
</comment>
<comment type="subunit">
    <text evidence="1">Homodimer.</text>
</comment>
<comment type="subcellular location">
    <subcellularLocation>
        <location evidence="1">Cytoplasm</location>
    </subcellularLocation>
</comment>
<comment type="similarity">
    <text evidence="1">Belongs to the purine/pyrimidine phosphoribosyltransferase family.</text>
</comment>
<comment type="sequence caution" evidence="2">
    <conflict type="erroneous initiation">
        <sequence resource="EMBL-CDS" id="AAF14237"/>
    </conflict>
</comment>
<feature type="chain" id="PRO_0000149438" description="Adenine phosphoribosyltransferase">
    <location>
        <begin position="1"/>
        <end position="181"/>
    </location>
</feature>